<reference key="1">
    <citation type="journal article" date="2005" name="J. Bacteriol.">
        <title>Insights on evolution of virulence and resistance from the complete genome analysis of an early methicillin-resistant Staphylococcus aureus strain and a biofilm-producing methicillin-resistant Staphylococcus epidermidis strain.</title>
        <authorList>
            <person name="Gill S.R."/>
            <person name="Fouts D.E."/>
            <person name="Archer G.L."/>
            <person name="Mongodin E.F."/>
            <person name="DeBoy R.T."/>
            <person name="Ravel J."/>
            <person name="Paulsen I.T."/>
            <person name="Kolonay J.F."/>
            <person name="Brinkac L.M."/>
            <person name="Beanan M.J."/>
            <person name="Dodson R.J."/>
            <person name="Daugherty S.C."/>
            <person name="Madupu R."/>
            <person name="Angiuoli S.V."/>
            <person name="Durkin A.S."/>
            <person name="Haft D.H."/>
            <person name="Vamathevan J.J."/>
            <person name="Khouri H."/>
            <person name="Utterback T.R."/>
            <person name="Lee C."/>
            <person name="Dimitrov G."/>
            <person name="Jiang L."/>
            <person name="Qin H."/>
            <person name="Weidman J."/>
            <person name="Tran K."/>
            <person name="Kang K.H."/>
            <person name="Hance I.R."/>
            <person name="Nelson K.E."/>
            <person name="Fraser C.M."/>
        </authorList>
    </citation>
    <scope>NUCLEOTIDE SEQUENCE [LARGE SCALE GENOMIC DNA]</scope>
    <source>
        <strain>COL</strain>
    </source>
</reference>
<evidence type="ECO:0000250" key="1"/>
<evidence type="ECO:0000255" key="2"/>
<evidence type="ECO:0000305" key="3"/>
<feature type="initiator methionine" description="Removed" evidence="1">
    <location>
        <position position="1"/>
    </location>
</feature>
<feature type="chain" id="PRO_0000219584" description="HTH-type transcriptional regulator SarR">
    <location>
        <begin position="2"/>
        <end position="115"/>
    </location>
</feature>
<feature type="DNA-binding region" description="H-T-H motif" evidence="2">
    <location>
        <begin position="51"/>
        <end position="74"/>
    </location>
</feature>
<dbReference type="EMBL" id="CP000046">
    <property type="protein sequence ID" value="AAW38507.1"/>
    <property type="molecule type" value="Genomic_DNA"/>
</dbReference>
<dbReference type="RefSeq" id="WP_000036076.1">
    <property type="nucleotide sequence ID" value="NZ_JBGOFO010000004.1"/>
</dbReference>
<dbReference type="SMR" id="Q5HDR3"/>
<dbReference type="KEGG" id="sac:SACOL2287"/>
<dbReference type="HOGENOM" id="CLU_164084_0_0_9"/>
<dbReference type="Proteomes" id="UP000000530">
    <property type="component" value="Chromosome"/>
</dbReference>
<dbReference type="GO" id="GO:0005737">
    <property type="term" value="C:cytoplasm"/>
    <property type="evidence" value="ECO:0007669"/>
    <property type="project" value="UniProtKB-SubCell"/>
</dbReference>
<dbReference type="GO" id="GO:0003677">
    <property type="term" value="F:DNA binding"/>
    <property type="evidence" value="ECO:0007669"/>
    <property type="project" value="UniProtKB-KW"/>
</dbReference>
<dbReference type="GO" id="GO:0003700">
    <property type="term" value="F:DNA-binding transcription factor activity"/>
    <property type="evidence" value="ECO:0007669"/>
    <property type="project" value="InterPro"/>
</dbReference>
<dbReference type="GO" id="GO:0006950">
    <property type="term" value="P:response to stress"/>
    <property type="evidence" value="ECO:0007669"/>
    <property type="project" value="TreeGrafter"/>
</dbReference>
<dbReference type="FunFam" id="1.10.10.10:FF:000578">
    <property type="entry name" value="HTH-type transcriptional regulator SarR"/>
    <property type="match status" value="1"/>
</dbReference>
<dbReference type="Gene3D" id="1.10.10.10">
    <property type="entry name" value="Winged helix-like DNA-binding domain superfamily/Winged helix DNA-binding domain"/>
    <property type="match status" value="1"/>
</dbReference>
<dbReference type="InterPro" id="IPR039422">
    <property type="entry name" value="MarR/SlyA-like"/>
</dbReference>
<dbReference type="InterPro" id="IPR010166">
    <property type="entry name" value="SarA/Rot_dom"/>
</dbReference>
<dbReference type="InterPro" id="IPR055166">
    <property type="entry name" value="Transc_reg_Sar_Rot_HTH"/>
</dbReference>
<dbReference type="InterPro" id="IPR036388">
    <property type="entry name" value="WH-like_DNA-bd_sf"/>
</dbReference>
<dbReference type="InterPro" id="IPR036390">
    <property type="entry name" value="WH_DNA-bd_sf"/>
</dbReference>
<dbReference type="NCBIfam" id="TIGR01889">
    <property type="entry name" value="Staph_reg_Sar"/>
    <property type="match status" value="1"/>
</dbReference>
<dbReference type="PANTHER" id="PTHR33164:SF56">
    <property type="entry name" value="HTH-TYPE TRANSCRIPTIONAL REGULATOR MHQR"/>
    <property type="match status" value="1"/>
</dbReference>
<dbReference type="PANTHER" id="PTHR33164">
    <property type="entry name" value="TRANSCRIPTIONAL REGULATOR, MARR FAMILY"/>
    <property type="match status" value="1"/>
</dbReference>
<dbReference type="Pfam" id="PF22381">
    <property type="entry name" value="Staph_reg_Sar_Rot"/>
    <property type="match status" value="1"/>
</dbReference>
<dbReference type="SUPFAM" id="SSF46785">
    <property type="entry name" value="Winged helix' DNA-binding domain"/>
    <property type="match status" value="1"/>
</dbReference>
<comment type="function">
    <text evidence="1">Negative regulator of sarA transcription at late exponential and stationary growth phases. It contributes to the modulation of target genes downstream of the sarA regulatory cascade. Also, positively regulates expression of primary transcripts RNAII and RNAIII generated by agr (virulence accessory gene regulator) locus (By similarity).</text>
</comment>
<comment type="subunit">
    <text evidence="1">Homodimer.</text>
</comment>
<comment type="subcellular location">
    <subcellularLocation>
        <location evidence="1">Cytoplasm</location>
    </subcellularLocation>
</comment>
<comment type="similarity">
    <text evidence="3">Belongs to the SarA family.</text>
</comment>
<sequence>MSKINDINDLVNATFQVKKFFRDTKKKFNLNYEEIYILNHILRSESNEISSKEIAKCSEFKPYYLTKALQKLKDLKLLSKKRSLQDERTVIVYVTDTQKANIQKLISELEEYIKN</sequence>
<name>SARR_STAAC</name>
<organism>
    <name type="scientific">Staphylococcus aureus (strain COL)</name>
    <dbReference type="NCBI Taxonomy" id="93062"/>
    <lineage>
        <taxon>Bacteria</taxon>
        <taxon>Bacillati</taxon>
        <taxon>Bacillota</taxon>
        <taxon>Bacilli</taxon>
        <taxon>Bacillales</taxon>
        <taxon>Staphylococcaceae</taxon>
        <taxon>Staphylococcus</taxon>
    </lineage>
</organism>
<gene>
    <name type="primary">sarR</name>
    <name type="ordered locus">SACOL2287</name>
</gene>
<keyword id="KW-0010">Activator</keyword>
<keyword id="KW-0963">Cytoplasm</keyword>
<keyword id="KW-0238">DNA-binding</keyword>
<keyword id="KW-0678">Repressor</keyword>
<keyword id="KW-0804">Transcription</keyword>
<keyword id="KW-0805">Transcription regulation</keyword>
<keyword id="KW-0843">Virulence</keyword>
<accession>Q5HDR3</accession>
<protein>
    <recommendedName>
        <fullName>HTH-type transcriptional regulator SarR</fullName>
    </recommendedName>
    <alternativeName>
        <fullName>Staphylococcal accessory regulator R</fullName>
    </alternativeName>
</protein>
<proteinExistence type="inferred from homology"/>